<accession>Q2LQ82</accession>
<comment type="function">
    <text evidence="1">Catalyzes the decarboxylation of orotidine 5'-monophosphate (OMP) to uridine 5'-monophosphate (UMP).</text>
</comment>
<comment type="catalytic activity">
    <reaction evidence="1">
        <text>orotidine 5'-phosphate + H(+) = UMP + CO2</text>
        <dbReference type="Rhea" id="RHEA:11596"/>
        <dbReference type="ChEBI" id="CHEBI:15378"/>
        <dbReference type="ChEBI" id="CHEBI:16526"/>
        <dbReference type="ChEBI" id="CHEBI:57538"/>
        <dbReference type="ChEBI" id="CHEBI:57865"/>
        <dbReference type="EC" id="4.1.1.23"/>
    </reaction>
</comment>
<comment type="pathway">
    <text evidence="1">Pyrimidine metabolism; UMP biosynthesis via de novo pathway; UMP from orotate: step 2/2.</text>
</comment>
<comment type="subunit">
    <text evidence="1">Homodimer.</text>
</comment>
<comment type="similarity">
    <text evidence="1">Belongs to the OMP decarboxylase family. Type 1 subfamily.</text>
</comment>
<keyword id="KW-0210">Decarboxylase</keyword>
<keyword id="KW-0456">Lyase</keyword>
<keyword id="KW-0665">Pyrimidine biosynthesis</keyword>
<keyword id="KW-1185">Reference proteome</keyword>
<evidence type="ECO:0000255" key="1">
    <source>
        <dbReference type="HAMAP-Rule" id="MF_01200"/>
    </source>
</evidence>
<proteinExistence type="inferred from homology"/>
<name>PYRF_SYNAS</name>
<sequence>MTKTMSNKESLEKLIFALDMGGGLDDVMSWVRRLAGHVGVFKVGKEAFTRFGPQLVQSIQETGSRVFLDLKFHDIPNTVARAAEGAVELGVAMFNVHALGGMSMMTETVESVKKMAGRRELPMPLILGVTVLTSLNDEDLQRLGFTCTTGELVLRLARMAQDAGLSGVVASAQDVEAIRAACGKDFVIVTPGIRGLARVAGDDQKRVLTAEEAVRRGSDYLVIGRPIRTAEDPVAAADDFCREIARGLSAR</sequence>
<gene>
    <name evidence="1" type="primary">pyrF</name>
    <name type="ordered locus">SYNAS_02780</name>
    <name type="ORF">SYN_01281</name>
</gene>
<dbReference type="EC" id="4.1.1.23" evidence="1"/>
<dbReference type="EMBL" id="CP000252">
    <property type="protein sequence ID" value="ABC76157.1"/>
    <property type="molecule type" value="Genomic_DNA"/>
</dbReference>
<dbReference type="SMR" id="Q2LQ82"/>
<dbReference type="FunCoup" id="Q2LQ82">
    <property type="interactions" value="339"/>
</dbReference>
<dbReference type="STRING" id="56780.SYN_01281"/>
<dbReference type="KEGG" id="sat:SYN_01281"/>
<dbReference type="eggNOG" id="COG0284">
    <property type="taxonomic scope" value="Bacteria"/>
</dbReference>
<dbReference type="HOGENOM" id="CLU_067069_1_0_7"/>
<dbReference type="InParanoid" id="Q2LQ82"/>
<dbReference type="UniPathway" id="UPA00070">
    <property type="reaction ID" value="UER00120"/>
</dbReference>
<dbReference type="Proteomes" id="UP000001933">
    <property type="component" value="Chromosome"/>
</dbReference>
<dbReference type="GO" id="GO:0005829">
    <property type="term" value="C:cytosol"/>
    <property type="evidence" value="ECO:0007669"/>
    <property type="project" value="TreeGrafter"/>
</dbReference>
<dbReference type="GO" id="GO:0004590">
    <property type="term" value="F:orotidine-5'-phosphate decarboxylase activity"/>
    <property type="evidence" value="ECO:0007669"/>
    <property type="project" value="UniProtKB-UniRule"/>
</dbReference>
<dbReference type="GO" id="GO:0006207">
    <property type="term" value="P:'de novo' pyrimidine nucleobase biosynthetic process"/>
    <property type="evidence" value="ECO:0007669"/>
    <property type="project" value="InterPro"/>
</dbReference>
<dbReference type="GO" id="GO:0044205">
    <property type="term" value="P:'de novo' UMP biosynthetic process"/>
    <property type="evidence" value="ECO:0007669"/>
    <property type="project" value="UniProtKB-UniRule"/>
</dbReference>
<dbReference type="CDD" id="cd04725">
    <property type="entry name" value="OMP_decarboxylase_like"/>
    <property type="match status" value="1"/>
</dbReference>
<dbReference type="FunFam" id="3.20.20.70:FF:000015">
    <property type="entry name" value="Orotidine 5'-phosphate decarboxylase"/>
    <property type="match status" value="1"/>
</dbReference>
<dbReference type="Gene3D" id="3.20.20.70">
    <property type="entry name" value="Aldolase class I"/>
    <property type="match status" value="1"/>
</dbReference>
<dbReference type="HAMAP" id="MF_01200_B">
    <property type="entry name" value="OMPdecase_type1_B"/>
    <property type="match status" value="1"/>
</dbReference>
<dbReference type="InterPro" id="IPR013785">
    <property type="entry name" value="Aldolase_TIM"/>
</dbReference>
<dbReference type="InterPro" id="IPR014732">
    <property type="entry name" value="OMPdecase"/>
</dbReference>
<dbReference type="InterPro" id="IPR018089">
    <property type="entry name" value="OMPdecase_AS"/>
</dbReference>
<dbReference type="InterPro" id="IPR047596">
    <property type="entry name" value="OMPdecase_bac"/>
</dbReference>
<dbReference type="InterPro" id="IPR001754">
    <property type="entry name" value="OMPdeCOase_dom"/>
</dbReference>
<dbReference type="InterPro" id="IPR011060">
    <property type="entry name" value="RibuloseP-bd_barrel"/>
</dbReference>
<dbReference type="NCBIfam" id="NF001273">
    <property type="entry name" value="PRK00230.1"/>
    <property type="match status" value="1"/>
</dbReference>
<dbReference type="NCBIfam" id="TIGR01740">
    <property type="entry name" value="pyrF"/>
    <property type="match status" value="1"/>
</dbReference>
<dbReference type="PANTHER" id="PTHR32119">
    <property type="entry name" value="OROTIDINE 5'-PHOSPHATE DECARBOXYLASE"/>
    <property type="match status" value="1"/>
</dbReference>
<dbReference type="PANTHER" id="PTHR32119:SF2">
    <property type="entry name" value="OROTIDINE 5'-PHOSPHATE DECARBOXYLASE"/>
    <property type="match status" value="1"/>
</dbReference>
<dbReference type="Pfam" id="PF00215">
    <property type="entry name" value="OMPdecase"/>
    <property type="match status" value="1"/>
</dbReference>
<dbReference type="SMART" id="SM00934">
    <property type="entry name" value="OMPdecase"/>
    <property type="match status" value="1"/>
</dbReference>
<dbReference type="SUPFAM" id="SSF51366">
    <property type="entry name" value="Ribulose-phoshate binding barrel"/>
    <property type="match status" value="1"/>
</dbReference>
<dbReference type="PROSITE" id="PS00156">
    <property type="entry name" value="OMPDECASE"/>
    <property type="match status" value="1"/>
</dbReference>
<feature type="chain" id="PRO_0000241923" description="Orotidine 5'-phosphate decarboxylase">
    <location>
        <begin position="1"/>
        <end position="251"/>
    </location>
</feature>
<feature type="active site" description="Proton donor" evidence="1">
    <location>
        <position position="71"/>
    </location>
</feature>
<feature type="binding site" evidence="1">
    <location>
        <position position="19"/>
    </location>
    <ligand>
        <name>substrate</name>
    </ligand>
</feature>
<feature type="binding site" evidence="1">
    <location>
        <position position="42"/>
    </location>
    <ligand>
        <name>substrate</name>
    </ligand>
</feature>
<feature type="binding site" evidence="1">
    <location>
        <begin position="69"/>
        <end position="78"/>
    </location>
    <ligand>
        <name>substrate</name>
    </ligand>
</feature>
<feature type="binding site" evidence="1">
    <location>
        <position position="133"/>
    </location>
    <ligand>
        <name>substrate</name>
    </ligand>
</feature>
<feature type="binding site" evidence="1">
    <location>
        <position position="194"/>
    </location>
    <ligand>
        <name>substrate</name>
    </ligand>
</feature>
<feature type="binding site" evidence="1">
    <location>
        <position position="204"/>
    </location>
    <ligand>
        <name>substrate</name>
    </ligand>
</feature>
<feature type="binding site" evidence="1">
    <location>
        <position position="224"/>
    </location>
    <ligand>
        <name>substrate</name>
    </ligand>
</feature>
<feature type="binding site" evidence="1">
    <location>
        <position position="225"/>
    </location>
    <ligand>
        <name>substrate</name>
    </ligand>
</feature>
<protein>
    <recommendedName>
        <fullName evidence="1">Orotidine 5'-phosphate decarboxylase</fullName>
        <ecNumber evidence="1">4.1.1.23</ecNumber>
    </recommendedName>
    <alternativeName>
        <fullName evidence="1">OMP decarboxylase</fullName>
        <shortName evidence="1">OMPDCase</shortName>
        <shortName evidence="1">OMPdecase</shortName>
    </alternativeName>
</protein>
<organism>
    <name type="scientific">Syntrophus aciditrophicus (strain SB)</name>
    <dbReference type="NCBI Taxonomy" id="56780"/>
    <lineage>
        <taxon>Bacteria</taxon>
        <taxon>Pseudomonadati</taxon>
        <taxon>Thermodesulfobacteriota</taxon>
        <taxon>Syntrophia</taxon>
        <taxon>Syntrophales</taxon>
        <taxon>Syntrophaceae</taxon>
        <taxon>Syntrophus</taxon>
    </lineage>
</organism>
<reference key="1">
    <citation type="journal article" date="2007" name="Proc. Natl. Acad. Sci. U.S.A.">
        <title>The genome of Syntrophus aciditrophicus: life at the thermodynamic limit of microbial growth.</title>
        <authorList>
            <person name="McInerney M.J."/>
            <person name="Rohlin L."/>
            <person name="Mouttaki H."/>
            <person name="Kim U."/>
            <person name="Krupp R.S."/>
            <person name="Rios-Hernandez L."/>
            <person name="Sieber J."/>
            <person name="Struchtemeyer C.G."/>
            <person name="Bhattacharyya A."/>
            <person name="Campbell J.W."/>
            <person name="Gunsalus R.P."/>
        </authorList>
    </citation>
    <scope>NUCLEOTIDE SEQUENCE [LARGE SCALE GENOMIC DNA]</scope>
    <source>
        <strain>SB</strain>
    </source>
</reference>